<sequence>MFKPKAIAVDIDGTLTDRKRALNCRAVEALRKVKIPVILATGNISCFARAAAKLIGVSDVVICENGGVVRFEYDGEDIVLGDKEKCVEAVRVLEKHYEVELLDFEYRKSEVCMRRSFDINEARKLIEGMGVKLVDSGFAYHIMDADVSKGKALKFVAERLGISSAEFAVIGDSENDIDMFRVAGFGIAVANADERLKEYADLVTPSPDGEGVVEALQFLGLLR</sequence>
<gene>
    <name type="ordered locus">AF_0444</name>
</gene>
<evidence type="ECO:0000255" key="1">
    <source>
        <dbReference type="HAMAP-Rule" id="MF_01419"/>
    </source>
</evidence>
<accession>O29805</accession>
<keyword id="KW-0119">Carbohydrate metabolism</keyword>
<keyword id="KW-0378">Hydrolase</keyword>
<keyword id="KW-0460">Magnesium</keyword>
<keyword id="KW-0479">Metal-binding</keyword>
<keyword id="KW-1185">Reference proteome</keyword>
<dbReference type="EC" id="3.1.3.18" evidence="1"/>
<dbReference type="EMBL" id="AE000782">
    <property type="protein sequence ID" value="AAB90791.1"/>
    <property type="molecule type" value="Genomic_DNA"/>
</dbReference>
<dbReference type="PIR" id="D69305">
    <property type="entry name" value="D69305"/>
</dbReference>
<dbReference type="RefSeq" id="WP_010877951.1">
    <property type="nucleotide sequence ID" value="NC_000917.1"/>
</dbReference>
<dbReference type="SMR" id="O29805"/>
<dbReference type="STRING" id="224325.AF_0444"/>
<dbReference type="PaxDb" id="224325-AF_0444"/>
<dbReference type="EnsemblBacteria" id="AAB90791">
    <property type="protein sequence ID" value="AAB90791"/>
    <property type="gene ID" value="AF_0444"/>
</dbReference>
<dbReference type="KEGG" id="afu:AF_0444"/>
<dbReference type="eggNOG" id="arCOG01213">
    <property type="taxonomic scope" value="Archaea"/>
</dbReference>
<dbReference type="HOGENOM" id="CLU_044146_2_0_2"/>
<dbReference type="OrthoDB" id="120822at2157"/>
<dbReference type="PhylomeDB" id="O29805"/>
<dbReference type="Proteomes" id="UP000002199">
    <property type="component" value="Chromosome"/>
</dbReference>
<dbReference type="GO" id="GO:0005829">
    <property type="term" value="C:cytosol"/>
    <property type="evidence" value="ECO:0007669"/>
    <property type="project" value="TreeGrafter"/>
</dbReference>
<dbReference type="GO" id="GO:0000287">
    <property type="term" value="F:magnesium ion binding"/>
    <property type="evidence" value="ECO:0007669"/>
    <property type="project" value="InterPro"/>
</dbReference>
<dbReference type="GO" id="GO:0008967">
    <property type="term" value="F:phosphoglycolate phosphatase activity"/>
    <property type="evidence" value="ECO:0007669"/>
    <property type="project" value="UniProtKB-UniRule"/>
</dbReference>
<dbReference type="CDD" id="cd07514">
    <property type="entry name" value="HAD_Pase"/>
    <property type="match status" value="1"/>
</dbReference>
<dbReference type="Gene3D" id="3.90.1070.10">
    <property type="match status" value="1"/>
</dbReference>
<dbReference type="Gene3D" id="3.40.50.1000">
    <property type="entry name" value="HAD superfamily/HAD-like"/>
    <property type="match status" value="1"/>
</dbReference>
<dbReference type="HAMAP" id="MF_01419">
    <property type="entry name" value="GPH_hydrolase_arch"/>
    <property type="match status" value="1"/>
</dbReference>
<dbReference type="InterPro" id="IPR036412">
    <property type="entry name" value="HAD-like_sf"/>
</dbReference>
<dbReference type="InterPro" id="IPR006379">
    <property type="entry name" value="HAD-SF_hydro_IIB"/>
</dbReference>
<dbReference type="InterPro" id="IPR023214">
    <property type="entry name" value="HAD_sf"/>
</dbReference>
<dbReference type="InterPro" id="IPR006382">
    <property type="entry name" value="PGPase"/>
</dbReference>
<dbReference type="NCBIfam" id="TIGR01484">
    <property type="entry name" value="HAD-SF-IIB"/>
    <property type="match status" value="1"/>
</dbReference>
<dbReference type="NCBIfam" id="TIGR01487">
    <property type="entry name" value="Pglycolate_arch"/>
    <property type="match status" value="1"/>
</dbReference>
<dbReference type="NCBIfam" id="NF002245">
    <property type="entry name" value="PRK01158.1"/>
    <property type="match status" value="1"/>
</dbReference>
<dbReference type="NCBIfam" id="TIGR01482">
    <property type="entry name" value="SPP-subfamily"/>
    <property type="match status" value="1"/>
</dbReference>
<dbReference type="PANTHER" id="PTHR10000:SF8">
    <property type="entry name" value="HAD SUPERFAMILY HYDROLASE-LIKE, TYPE 3"/>
    <property type="match status" value="1"/>
</dbReference>
<dbReference type="PANTHER" id="PTHR10000">
    <property type="entry name" value="PHOSPHOSERINE PHOSPHATASE"/>
    <property type="match status" value="1"/>
</dbReference>
<dbReference type="Pfam" id="PF08282">
    <property type="entry name" value="Hydrolase_3"/>
    <property type="match status" value="2"/>
</dbReference>
<dbReference type="SFLD" id="SFLDS00003">
    <property type="entry name" value="Haloacid_Dehalogenase"/>
    <property type="match status" value="1"/>
</dbReference>
<dbReference type="SFLD" id="SFLDF00446">
    <property type="entry name" value="phosphoglycolate_phosphatase_3"/>
    <property type="match status" value="1"/>
</dbReference>
<dbReference type="SUPFAM" id="SSF56784">
    <property type="entry name" value="HAD-like"/>
    <property type="match status" value="1"/>
</dbReference>
<name>PGP_ARCFU</name>
<feature type="chain" id="PRO_0000146714" description="Phosphoglycolate phosphatase">
    <location>
        <begin position="1"/>
        <end position="223"/>
    </location>
</feature>
<feature type="active site" description="Nucleophile" evidence="1">
    <location>
        <position position="10"/>
    </location>
</feature>
<feature type="binding site" evidence="1">
    <location>
        <position position="10"/>
    </location>
    <ligand>
        <name>Mg(2+)</name>
        <dbReference type="ChEBI" id="CHEBI:18420"/>
    </ligand>
</feature>
<feature type="binding site" evidence="1">
    <location>
        <position position="12"/>
    </location>
    <ligand>
        <name>Mg(2+)</name>
        <dbReference type="ChEBI" id="CHEBI:18420"/>
    </ligand>
</feature>
<feature type="binding site" evidence="1">
    <location>
        <position position="149"/>
    </location>
    <ligand>
        <name>substrate</name>
    </ligand>
</feature>
<feature type="binding site" evidence="1">
    <location>
        <position position="172"/>
    </location>
    <ligand>
        <name>Mg(2+)</name>
        <dbReference type="ChEBI" id="CHEBI:18420"/>
    </ligand>
</feature>
<feature type="binding site" evidence="1">
    <location>
        <position position="176"/>
    </location>
    <ligand>
        <name>Mg(2+)</name>
        <dbReference type="ChEBI" id="CHEBI:18420"/>
    </ligand>
</feature>
<organism>
    <name type="scientific">Archaeoglobus fulgidus (strain ATCC 49558 / DSM 4304 / JCM 9628 / NBRC 100126 / VC-16)</name>
    <dbReference type="NCBI Taxonomy" id="224325"/>
    <lineage>
        <taxon>Archaea</taxon>
        <taxon>Methanobacteriati</taxon>
        <taxon>Methanobacteriota</taxon>
        <taxon>Archaeoglobi</taxon>
        <taxon>Archaeoglobales</taxon>
        <taxon>Archaeoglobaceae</taxon>
        <taxon>Archaeoglobus</taxon>
    </lineage>
</organism>
<comment type="function">
    <text evidence="1">Catalyzes the dephosphorylation of 2-phosphoglycolate.</text>
</comment>
<comment type="catalytic activity">
    <reaction evidence="1">
        <text>2-phosphoglycolate + H2O = glycolate + phosphate</text>
        <dbReference type="Rhea" id="RHEA:14369"/>
        <dbReference type="ChEBI" id="CHEBI:15377"/>
        <dbReference type="ChEBI" id="CHEBI:29805"/>
        <dbReference type="ChEBI" id="CHEBI:43474"/>
        <dbReference type="ChEBI" id="CHEBI:58033"/>
        <dbReference type="EC" id="3.1.3.18"/>
    </reaction>
</comment>
<comment type="cofactor">
    <cofactor evidence="1">
        <name>Mg(2+)</name>
        <dbReference type="ChEBI" id="CHEBI:18420"/>
    </cofactor>
</comment>
<comment type="similarity">
    <text evidence="1">Belongs to the archaeal SPP-like hydrolase family.</text>
</comment>
<proteinExistence type="inferred from homology"/>
<protein>
    <recommendedName>
        <fullName evidence="1">Phosphoglycolate phosphatase</fullName>
        <shortName evidence="1">PGP</shortName>
        <shortName evidence="1">PGPase</shortName>
        <ecNumber evidence="1">3.1.3.18</ecNumber>
    </recommendedName>
</protein>
<reference key="1">
    <citation type="journal article" date="1997" name="Nature">
        <title>The complete genome sequence of the hyperthermophilic, sulphate-reducing archaeon Archaeoglobus fulgidus.</title>
        <authorList>
            <person name="Klenk H.-P."/>
            <person name="Clayton R.A."/>
            <person name="Tomb J.-F."/>
            <person name="White O."/>
            <person name="Nelson K.E."/>
            <person name="Ketchum K.A."/>
            <person name="Dodson R.J."/>
            <person name="Gwinn M.L."/>
            <person name="Hickey E.K."/>
            <person name="Peterson J.D."/>
            <person name="Richardson D.L."/>
            <person name="Kerlavage A.R."/>
            <person name="Graham D.E."/>
            <person name="Kyrpides N.C."/>
            <person name="Fleischmann R.D."/>
            <person name="Quackenbush J."/>
            <person name="Lee N.H."/>
            <person name="Sutton G.G."/>
            <person name="Gill S.R."/>
            <person name="Kirkness E.F."/>
            <person name="Dougherty B.A."/>
            <person name="McKenney K."/>
            <person name="Adams M.D."/>
            <person name="Loftus B.J."/>
            <person name="Peterson S.N."/>
            <person name="Reich C.I."/>
            <person name="McNeil L.K."/>
            <person name="Badger J.H."/>
            <person name="Glodek A."/>
            <person name="Zhou L."/>
            <person name="Overbeek R."/>
            <person name="Gocayne J.D."/>
            <person name="Weidman J.F."/>
            <person name="McDonald L.A."/>
            <person name="Utterback T.R."/>
            <person name="Cotton M.D."/>
            <person name="Spriggs T."/>
            <person name="Artiach P."/>
            <person name="Kaine B.P."/>
            <person name="Sykes S.M."/>
            <person name="Sadow P.W."/>
            <person name="D'Andrea K.P."/>
            <person name="Bowman C."/>
            <person name="Fujii C."/>
            <person name="Garland S.A."/>
            <person name="Mason T.M."/>
            <person name="Olsen G.J."/>
            <person name="Fraser C.M."/>
            <person name="Smith H.O."/>
            <person name="Woese C.R."/>
            <person name="Venter J.C."/>
        </authorList>
    </citation>
    <scope>NUCLEOTIDE SEQUENCE [LARGE SCALE GENOMIC DNA]</scope>
    <source>
        <strain>ATCC 49558 / DSM 4304 / JCM 9628 / NBRC 100126 / VC-16</strain>
    </source>
</reference>